<dbReference type="EC" id="6.1.1.19" evidence="1"/>
<dbReference type="EMBL" id="CP000675">
    <property type="protein sequence ID" value="ABQ55464.1"/>
    <property type="molecule type" value="Genomic_DNA"/>
</dbReference>
<dbReference type="SMR" id="A5IDL4"/>
<dbReference type="KEGG" id="lpc:LPC_1515"/>
<dbReference type="HOGENOM" id="CLU_006406_0_1_6"/>
<dbReference type="GO" id="GO:0005737">
    <property type="term" value="C:cytoplasm"/>
    <property type="evidence" value="ECO:0007669"/>
    <property type="project" value="UniProtKB-SubCell"/>
</dbReference>
<dbReference type="GO" id="GO:0004814">
    <property type="term" value="F:arginine-tRNA ligase activity"/>
    <property type="evidence" value="ECO:0007669"/>
    <property type="project" value="UniProtKB-UniRule"/>
</dbReference>
<dbReference type="GO" id="GO:0005524">
    <property type="term" value="F:ATP binding"/>
    <property type="evidence" value="ECO:0007669"/>
    <property type="project" value="UniProtKB-UniRule"/>
</dbReference>
<dbReference type="GO" id="GO:0006420">
    <property type="term" value="P:arginyl-tRNA aminoacylation"/>
    <property type="evidence" value="ECO:0007669"/>
    <property type="project" value="UniProtKB-UniRule"/>
</dbReference>
<dbReference type="CDD" id="cd00671">
    <property type="entry name" value="ArgRS_core"/>
    <property type="match status" value="1"/>
</dbReference>
<dbReference type="FunFam" id="1.10.730.10:FF:000008">
    <property type="entry name" value="Arginine--tRNA ligase"/>
    <property type="match status" value="1"/>
</dbReference>
<dbReference type="FunFam" id="3.30.1360.70:FF:000003">
    <property type="entry name" value="Arginine--tRNA ligase"/>
    <property type="match status" value="1"/>
</dbReference>
<dbReference type="Gene3D" id="3.30.1360.70">
    <property type="entry name" value="Arginyl tRNA synthetase N-terminal domain"/>
    <property type="match status" value="1"/>
</dbReference>
<dbReference type="Gene3D" id="3.40.50.620">
    <property type="entry name" value="HUPs"/>
    <property type="match status" value="1"/>
</dbReference>
<dbReference type="Gene3D" id="1.10.730.10">
    <property type="entry name" value="Isoleucyl-tRNA Synthetase, Domain 1"/>
    <property type="match status" value="1"/>
</dbReference>
<dbReference type="HAMAP" id="MF_00123">
    <property type="entry name" value="Arg_tRNA_synth"/>
    <property type="match status" value="1"/>
</dbReference>
<dbReference type="InterPro" id="IPR001412">
    <property type="entry name" value="aa-tRNA-synth_I_CS"/>
</dbReference>
<dbReference type="InterPro" id="IPR001278">
    <property type="entry name" value="Arg-tRNA-ligase"/>
</dbReference>
<dbReference type="InterPro" id="IPR005148">
    <property type="entry name" value="Arg-tRNA-synth_N"/>
</dbReference>
<dbReference type="InterPro" id="IPR036695">
    <property type="entry name" value="Arg-tRNA-synth_N_sf"/>
</dbReference>
<dbReference type="InterPro" id="IPR035684">
    <property type="entry name" value="ArgRS_core"/>
</dbReference>
<dbReference type="InterPro" id="IPR008909">
    <property type="entry name" value="DALR_anticod-bd"/>
</dbReference>
<dbReference type="InterPro" id="IPR014729">
    <property type="entry name" value="Rossmann-like_a/b/a_fold"/>
</dbReference>
<dbReference type="InterPro" id="IPR009080">
    <property type="entry name" value="tRNAsynth_Ia_anticodon-bd"/>
</dbReference>
<dbReference type="NCBIfam" id="TIGR00456">
    <property type="entry name" value="argS"/>
    <property type="match status" value="1"/>
</dbReference>
<dbReference type="PANTHER" id="PTHR11956:SF5">
    <property type="entry name" value="ARGININE--TRNA LIGASE, CYTOPLASMIC"/>
    <property type="match status" value="1"/>
</dbReference>
<dbReference type="PANTHER" id="PTHR11956">
    <property type="entry name" value="ARGINYL-TRNA SYNTHETASE"/>
    <property type="match status" value="1"/>
</dbReference>
<dbReference type="Pfam" id="PF03485">
    <property type="entry name" value="Arg_tRNA_synt_N"/>
    <property type="match status" value="1"/>
</dbReference>
<dbReference type="Pfam" id="PF05746">
    <property type="entry name" value="DALR_1"/>
    <property type="match status" value="1"/>
</dbReference>
<dbReference type="Pfam" id="PF00750">
    <property type="entry name" value="tRNA-synt_1d"/>
    <property type="match status" value="2"/>
</dbReference>
<dbReference type="PRINTS" id="PR01038">
    <property type="entry name" value="TRNASYNTHARG"/>
</dbReference>
<dbReference type="SMART" id="SM01016">
    <property type="entry name" value="Arg_tRNA_synt_N"/>
    <property type="match status" value="1"/>
</dbReference>
<dbReference type="SMART" id="SM00836">
    <property type="entry name" value="DALR_1"/>
    <property type="match status" value="1"/>
</dbReference>
<dbReference type="SUPFAM" id="SSF47323">
    <property type="entry name" value="Anticodon-binding domain of a subclass of class I aminoacyl-tRNA synthetases"/>
    <property type="match status" value="1"/>
</dbReference>
<dbReference type="SUPFAM" id="SSF55190">
    <property type="entry name" value="Arginyl-tRNA synthetase (ArgRS), N-terminal 'additional' domain"/>
    <property type="match status" value="1"/>
</dbReference>
<dbReference type="SUPFAM" id="SSF52374">
    <property type="entry name" value="Nucleotidylyl transferase"/>
    <property type="match status" value="1"/>
</dbReference>
<dbReference type="PROSITE" id="PS00178">
    <property type="entry name" value="AA_TRNA_LIGASE_I"/>
    <property type="match status" value="1"/>
</dbReference>
<organism>
    <name type="scientific">Legionella pneumophila (strain Corby)</name>
    <dbReference type="NCBI Taxonomy" id="400673"/>
    <lineage>
        <taxon>Bacteria</taxon>
        <taxon>Pseudomonadati</taxon>
        <taxon>Pseudomonadota</taxon>
        <taxon>Gammaproteobacteria</taxon>
        <taxon>Legionellales</taxon>
        <taxon>Legionellaceae</taxon>
        <taxon>Legionella</taxon>
    </lineage>
</organism>
<name>SYR_LEGPC</name>
<evidence type="ECO:0000255" key="1">
    <source>
        <dbReference type="HAMAP-Rule" id="MF_00123"/>
    </source>
</evidence>
<keyword id="KW-0030">Aminoacyl-tRNA synthetase</keyword>
<keyword id="KW-0067">ATP-binding</keyword>
<keyword id="KW-0963">Cytoplasm</keyword>
<keyword id="KW-0436">Ligase</keyword>
<keyword id="KW-0547">Nucleotide-binding</keyword>
<keyword id="KW-0648">Protein biosynthesis</keyword>
<feature type="chain" id="PRO_1000198913" description="Arginine--tRNA ligase">
    <location>
        <begin position="1"/>
        <end position="586"/>
    </location>
</feature>
<feature type="short sequence motif" description="'HIGH' region">
    <location>
        <begin position="128"/>
        <end position="138"/>
    </location>
</feature>
<gene>
    <name evidence="1" type="primary">argS</name>
    <name type="ordered locus">LPC_1515</name>
</gene>
<proteinExistence type="inferred from homology"/>
<sequence>MKAIIEYLLKQALINLQQSGEMPIDLEIEIKVENAKDPAHGDYATNLALVLAKPCRQAPKVLAERLVAVIPSDPSVEKIEIAGAGFINFFMRNTARSLIISEILNKGKEFGRGNLGQSQKVLIEFVSANPTGPLHVGHGRGAAFGATLGNVLKAAGYDVTLEYYVNDAGRQMNILAVSVWLRYLELAGEPIVFPANGYKGQYVYEIAQEMWSEQGNQFVHPWISVVENLPADEPEGGDKETYIDAIIARAQSLLGKDGFANFHQHALKTVLDDIKDDLQAFGVRFDSWFSEQSLFEDGSIEKGIQALKDRGHTYEREGALWFRATDFGDEKDRVLVRANGQTTYFASDVAYHWNKYDRGFDRVIDIFGADHHGYVTRIKTAVKALGHDESALDVILVQFAILYRGGDRVQMSTRSGSFVTLRELREEVGNDAARYFYVARKPEQHMDFDLDLAKSESSDNPVYYIQYAHARICSVLRQLKERGLKWDKDMGLKNLDLLEQQHETTLISLIARYPEVIQSAAASCEPHQLAYYLRELANGLHSYYNAIQLLCEQEQLRCARLCLLESVRQVLNNGLAILGVSAPESM</sequence>
<reference key="1">
    <citation type="submission" date="2006-11" db="EMBL/GenBank/DDBJ databases">
        <title>Identification and characterization of a new conjugation/ type IVA secretion system (trb/tra) of L. pneumophila Corby localized on a mobile genomic island.</title>
        <authorList>
            <person name="Gloeckner G."/>
            <person name="Albert-Weissenberger C."/>
            <person name="Weinmann E."/>
            <person name="Jacobi S."/>
            <person name="Schunder E."/>
            <person name="Steinert M."/>
            <person name="Buchrieser C."/>
            <person name="Hacker J."/>
            <person name="Heuner K."/>
        </authorList>
    </citation>
    <scope>NUCLEOTIDE SEQUENCE [LARGE SCALE GENOMIC DNA]</scope>
    <source>
        <strain>Corby</strain>
    </source>
</reference>
<accession>A5IDL4</accession>
<protein>
    <recommendedName>
        <fullName evidence="1">Arginine--tRNA ligase</fullName>
        <ecNumber evidence="1">6.1.1.19</ecNumber>
    </recommendedName>
    <alternativeName>
        <fullName evidence="1">Arginyl-tRNA synthetase</fullName>
        <shortName evidence="1">ArgRS</shortName>
    </alternativeName>
</protein>
<comment type="catalytic activity">
    <reaction evidence="1">
        <text>tRNA(Arg) + L-arginine + ATP = L-arginyl-tRNA(Arg) + AMP + diphosphate</text>
        <dbReference type="Rhea" id="RHEA:20301"/>
        <dbReference type="Rhea" id="RHEA-COMP:9658"/>
        <dbReference type="Rhea" id="RHEA-COMP:9673"/>
        <dbReference type="ChEBI" id="CHEBI:30616"/>
        <dbReference type="ChEBI" id="CHEBI:32682"/>
        <dbReference type="ChEBI" id="CHEBI:33019"/>
        <dbReference type="ChEBI" id="CHEBI:78442"/>
        <dbReference type="ChEBI" id="CHEBI:78513"/>
        <dbReference type="ChEBI" id="CHEBI:456215"/>
        <dbReference type="EC" id="6.1.1.19"/>
    </reaction>
</comment>
<comment type="subunit">
    <text evidence="1">Monomer.</text>
</comment>
<comment type="subcellular location">
    <subcellularLocation>
        <location evidence="1">Cytoplasm</location>
    </subcellularLocation>
</comment>
<comment type="similarity">
    <text evidence="1">Belongs to the class-I aminoacyl-tRNA synthetase family.</text>
</comment>